<feature type="chain" id="PRO_0000071991" description="Single-strand selective monofunctional uracil DNA glycosylase">
    <location>
        <begin position="1"/>
        <end position="272"/>
    </location>
</feature>
<feature type="region of interest" description="Disordered" evidence="3">
    <location>
        <begin position="1"/>
        <end position="27"/>
    </location>
</feature>
<feature type="region of interest" description="DNA-binding" evidence="1">
    <location>
        <begin position="175"/>
        <end position="189"/>
    </location>
</feature>
<feature type="binding site" evidence="1">
    <location>
        <position position="86"/>
    </location>
    <ligand>
        <name>substrate</name>
    </ligand>
</feature>
<feature type="binding site" evidence="1">
    <location>
        <position position="100"/>
    </location>
    <ligand>
        <name>substrate</name>
    </ligand>
</feature>
<feature type="binding site" evidence="1">
    <location>
        <position position="165"/>
    </location>
    <ligand>
        <name>substrate</name>
    </ligand>
</feature>
<feature type="binding site" evidence="1">
    <location>
        <position position="241"/>
    </location>
    <ligand>
        <name>substrate</name>
    </ligand>
</feature>
<organism>
    <name type="scientific">Bos taurus</name>
    <name type="common">Bovine</name>
    <dbReference type="NCBI Taxonomy" id="9913"/>
    <lineage>
        <taxon>Eukaryota</taxon>
        <taxon>Metazoa</taxon>
        <taxon>Chordata</taxon>
        <taxon>Craniata</taxon>
        <taxon>Vertebrata</taxon>
        <taxon>Euteleostomi</taxon>
        <taxon>Mammalia</taxon>
        <taxon>Eutheria</taxon>
        <taxon>Laurasiatheria</taxon>
        <taxon>Artiodactyla</taxon>
        <taxon>Ruminantia</taxon>
        <taxon>Pecora</taxon>
        <taxon>Bovidae</taxon>
        <taxon>Bovinae</taxon>
        <taxon>Bos</taxon>
    </lineage>
</organism>
<reference key="1">
    <citation type="journal article" date="2005" name="Anim. Genet.">
        <title>Linkage analysis reveals two independent loci for ocular disorders in a local Japanese Black cattle population.</title>
        <authorList>
            <person name="Ihara N."/>
            <person name="Fujita T."/>
            <person name="Shiga K."/>
            <person name="Itoh M."/>
            <person name="Watanabe T."/>
            <person name="Sugimoto Y."/>
        </authorList>
    </citation>
    <scope>NUCLEOTIDE SEQUENCE [MRNA]</scope>
    <source>
        <tissue>Pancreas</tissue>
    </source>
</reference>
<reference key="2">
    <citation type="submission" date="2007-06" db="EMBL/GenBank/DDBJ databases">
        <authorList>
            <consortium name="NIH - Mammalian Gene Collection (MGC) project"/>
        </authorList>
    </citation>
    <scope>NUCLEOTIDE SEQUENCE [LARGE SCALE MRNA]</scope>
    <source>
        <strain>Hereford</strain>
        <tissue>Fetal brain</tissue>
    </source>
</reference>
<keyword id="KW-0227">DNA damage</keyword>
<keyword id="KW-0234">DNA repair</keyword>
<keyword id="KW-0238">DNA-binding</keyword>
<keyword id="KW-0378">Hydrolase</keyword>
<keyword id="KW-0539">Nucleus</keyword>
<keyword id="KW-1185">Reference proteome</keyword>
<evidence type="ECO:0000250" key="1"/>
<evidence type="ECO:0000250" key="2">
    <source>
        <dbReference type="UniProtKB" id="Q53HV7"/>
    </source>
</evidence>
<evidence type="ECO:0000256" key="3">
    <source>
        <dbReference type="SAM" id="MobiDB-lite"/>
    </source>
</evidence>
<comment type="function">
    <text evidence="2">Recognizes base lesions in the genome and initiates base excision DNA repair. Acts as a monofunctional DNA glycosylase specific for uracil (U) residues in DNA with a preference for single-stranded DNA substrates. The activity is greater toward mismatches (U/G) compared to matches (U/A). Excises uracil (U), 5-formyluracil (fU) and uracil derivatives bearing an oxidized group at C5 [5-hydroxyuracil (hoU) and 5-hydroxymethyluracil (hmU)] in ssDNA and dsDNA, but not analogous cytosine derivatives (5-hydroxycytosine and 5-formylcytosine), nor other oxidized bases. The activity is damage-specific and salt-dependent. The substrate preference is the following: ssDNA &gt; dsDNA (G pair) = dsDNA (A pair) at low salt concentration, and dsDNA (G pair) &gt; dsDNA (A pair) &gt; ssDNA at high salt concentration.</text>
</comment>
<comment type="subcellular location">
    <subcellularLocation>
        <location evidence="2">Nucleus</location>
    </subcellularLocation>
</comment>
<comment type="similarity">
    <text>Belongs to the uracil-DNA glycosylase (UDG) superfamily. SMUG1 family.</text>
</comment>
<protein>
    <recommendedName>
        <fullName>Single-strand selective monofunctional uracil DNA glycosylase</fullName>
        <ecNumber>3.2.2.-</ecNumber>
    </recommendedName>
</protein>
<sequence length="272" mass="30040">MAVPQPFPSGPHLQPAGALMEPQPSPRSLAEGFLQEELRLNDELRQLQFSELVGIVYNPVEYAWEPHRSYVTRYCQGPKQVLFLGMNPGPFGMAQTGVPFGEVSVVRDWLGLGGPVRTPPQEHPKRPVLGLECPQSEVSGARFWGFFRNLCGQPEVFFRHCFVHNLCPLLLLAPSGRNITPAELPAKQREQLLGVCDAALCRQVQLLGVRLVVGVGRVAEQRARRALASLMPEVQVEGLLHPSPRSPQANKGWEAVAKERLNELGLLPLLTS</sequence>
<dbReference type="EC" id="3.2.2.-"/>
<dbReference type="EMBL" id="AB195271">
    <property type="protein sequence ID" value="BAD91385.1"/>
    <property type="molecule type" value="mRNA"/>
</dbReference>
<dbReference type="EMBL" id="BC148122">
    <property type="protein sequence ID" value="AAI48123.1"/>
    <property type="molecule type" value="mRNA"/>
</dbReference>
<dbReference type="RefSeq" id="NP_001014958.1">
    <property type="nucleotide sequence ID" value="NM_001014958.1"/>
</dbReference>
<dbReference type="RefSeq" id="XP_005206225.1">
    <property type="nucleotide sequence ID" value="XM_005206168.4"/>
</dbReference>
<dbReference type="RefSeq" id="XP_005206226.1">
    <property type="nucleotide sequence ID" value="XM_005206169.5"/>
</dbReference>
<dbReference type="RefSeq" id="XP_015326436.1">
    <property type="nucleotide sequence ID" value="XM_015470950.3"/>
</dbReference>
<dbReference type="SMR" id="Q59I47"/>
<dbReference type="FunCoup" id="Q59I47">
    <property type="interactions" value="3331"/>
</dbReference>
<dbReference type="STRING" id="9913.ENSBTAP00000029297"/>
<dbReference type="PaxDb" id="9913-ENSBTAP00000029297"/>
<dbReference type="Ensembl" id="ENSBTAT00000029297.6">
    <property type="protein sequence ID" value="ENSBTAP00000029297.4"/>
    <property type="gene ID" value="ENSBTAG00000021974.7"/>
</dbReference>
<dbReference type="GeneID" id="539771"/>
<dbReference type="KEGG" id="bta:539771"/>
<dbReference type="CTD" id="23583"/>
<dbReference type="VEuPathDB" id="HostDB:ENSBTAG00000021974"/>
<dbReference type="VGNC" id="VGNC:35039">
    <property type="gene designation" value="SMUG1"/>
</dbReference>
<dbReference type="eggNOG" id="ENOG502QT20">
    <property type="taxonomic scope" value="Eukaryota"/>
</dbReference>
<dbReference type="GeneTree" id="ENSGT00390000004897"/>
<dbReference type="HOGENOM" id="CLU_071760_2_0_1"/>
<dbReference type="InParanoid" id="Q59I47"/>
<dbReference type="OMA" id="VANYCPL"/>
<dbReference type="OrthoDB" id="408702at2759"/>
<dbReference type="TreeFam" id="TF324356"/>
<dbReference type="Reactome" id="R-BTA-110329">
    <property type="pathway name" value="Cleavage of the damaged pyrimidine"/>
</dbReference>
<dbReference type="Reactome" id="R-BTA-110357">
    <property type="pathway name" value="Displacement of DNA glycosylase by APEX1"/>
</dbReference>
<dbReference type="Proteomes" id="UP000009136">
    <property type="component" value="Chromosome 5"/>
</dbReference>
<dbReference type="Bgee" id="ENSBTAG00000021974">
    <property type="expression patterns" value="Expressed in subcutaneous adipose tissue and 102 other cell types or tissues"/>
</dbReference>
<dbReference type="GO" id="GO:0005730">
    <property type="term" value="C:nucleolus"/>
    <property type="evidence" value="ECO:0000250"/>
    <property type="project" value="HGNC-UCL"/>
</dbReference>
<dbReference type="GO" id="GO:0003677">
    <property type="term" value="F:DNA binding"/>
    <property type="evidence" value="ECO:0007669"/>
    <property type="project" value="UniProtKB-KW"/>
</dbReference>
<dbReference type="GO" id="GO:0019104">
    <property type="term" value="F:DNA N-glycosylase activity"/>
    <property type="evidence" value="ECO:0000314"/>
    <property type="project" value="HGNC-UCL"/>
</dbReference>
<dbReference type="GO" id="GO:0000703">
    <property type="term" value="F:oxidized pyrimidine nucleobase lesion DNA N-glycosylase activity"/>
    <property type="evidence" value="ECO:0000318"/>
    <property type="project" value="GO_Central"/>
</dbReference>
<dbReference type="GO" id="GO:0017065">
    <property type="term" value="F:single-strand selective uracil DNA N-glycosylase activity"/>
    <property type="evidence" value="ECO:0000250"/>
    <property type="project" value="HGNC-UCL"/>
</dbReference>
<dbReference type="GO" id="GO:0004844">
    <property type="term" value="F:uracil DNA N-glycosylase activity"/>
    <property type="evidence" value="ECO:0000250"/>
    <property type="project" value="HGNC-UCL"/>
</dbReference>
<dbReference type="GO" id="GO:0006284">
    <property type="term" value="P:base-excision repair"/>
    <property type="evidence" value="ECO:0000250"/>
    <property type="project" value="HGNC-UCL"/>
</dbReference>
<dbReference type="CDD" id="cd19374">
    <property type="entry name" value="UDG-F3_SMUG1-like"/>
    <property type="match status" value="1"/>
</dbReference>
<dbReference type="FunFam" id="3.40.470.10:FF:000005">
    <property type="entry name" value="Single-strand selective monofunctional uracil DNA glycosylase"/>
    <property type="match status" value="1"/>
</dbReference>
<dbReference type="Gene3D" id="3.40.470.10">
    <property type="entry name" value="Uracil-DNA glycosylase-like domain"/>
    <property type="match status" value="1"/>
</dbReference>
<dbReference type="InterPro" id="IPR039134">
    <property type="entry name" value="SMUG1"/>
</dbReference>
<dbReference type="InterPro" id="IPR005122">
    <property type="entry name" value="Uracil-DNA_glycosylase-like"/>
</dbReference>
<dbReference type="InterPro" id="IPR036895">
    <property type="entry name" value="Uracil-DNA_glycosylase-like_sf"/>
</dbReference>
<dbReference type="PANTHER" id="PTHR13235">
    <property type="entry name" value="SINGLE-STRAND SELECTIVE MONOFUNCTIONAL URACIL DNA GLYCOSYLASE"/>
    <property type="match status" value="1"/>
</dbReference>
<dbReference type="PANTHER" id="PTHR13235:SF2">
    <property type="entry name" value="SINGLE-STRAND SELECTIVE MONOFUNCTIONAL URACIL DNA GLYCOSYLASE"/>
    <property type="match status" value="1"/>
</dbReference>
<dbReference type="Pfam" id="PF03167">
    <property type="entry name" value="UDG"/>
    <property type="match status" value="1"/>
</dbReference>
<dbReference type="SUPFAM" id="SSF52141">
    <property type="entry name" value="Uracil-DNA glycosylase-like"/>
    <property type="match status" value="1"/>
</dbReference>
<name>SMUG1_BOVIN</name>
<accession>Q59I47</accession>
<accession>A6QLX7</accession>
<gene>
    <name type="primary">SMUG1</name>
</gene>
<proteinExistence type="evidence at transcript level"/>